<gene>
    <name evidence="1" type="primary">psbF</name>
</gene>
<evidence type="ECO:0000255" key="1">
    <source>
        <dbReference type="HAMAP-Rule" id="MF_00643"/>
    </source>
</evidence>
<dbReference type="EMBL" id="AY100861">
    <property type="protein sequence ID" value="AAM55566.1"/>
    <property type="molecule type" value="Genomic_DNA"/>
</dbReference>
<dbReference type="RefSeq" id="YP_010578749.1">
    <property type="nucleotide sequence ID" value="NC_068906.1"/>
</dbReference>
<dbReference type="SMR" id="Q7H8J8"/>
<dbReference type="GeneID" id="76828232"/>
<dbReference type="GO" id="GO:0009535">
    <property type="term" value="C:chloroplast thylakoid membrane"/>
    <property type="evidence" value="ECO:0007669"/>
    <property type="project" value="UniProtKB-SubCell"/>
</dbReference>
<dbReference type="GO" id="GO:0009539">
    <property type="term" value="C:photosystem II reaction center"/>
    <property type="evidence" value="ECO:0007669"/>
    <property type="project" value="InterPro"/>
</dbReference>
<dbReference type="GO" id="GO:0009055">
    <property type="term" value="F:electron transfer activity"/>
    <property type="evidence" value="ECO:0007669"/>
    <property type="project" value="UniProtKB-UniRule"/>
</dbReference>
<dbReference type="GO" id="GO:0020037">
    <property type="term" value="F:heme binding"/>
    <property type="evidence" value="ECO:0007669"/>
    <property type="project" value="InterPro"/>
</dbReference>
<dbReference type="GO" id="GO:0005506">
    <property type="term" value="F:iron ion binding"/>
    <property type="evidence" value="ECO:0007669"/>
    <property type="project" value="UniProtKB-UniRule"/>
</dbReference>
<dbReference type="GO" id="GO:0009767">
    <property type="term" value="P:photosynthetic electron transport chain"/>
    <property type="evidence" value="ECO:0007669"/>
    <property type="project" value="InterPro"/>
</dbReference>
<dbReference type="HAMAP" id="MF_00643">
    <property type="entry name" value="PSII_PsbF"/>
    <property type="match status" value="1"/>
</dbReference>
<dbReference type="InterPro" id="IPR006241">
    <property type="entry name" value="PSII_cyt_b559_bsu"/>
</dbReference>
<dbReference type="InterPro" id="IPR006216">
    <property type="entry name" value="PSII_cyt_b559_CS"/>
</dbReference>
<dbReference type="InterPro" id="IPR013081">
    <property type="entry name" value="PSII_cyt_b559_N"/>
</dbReference>
<dbReference type="NCBIfam" id="TIGR01333">
    <property type="entry name" value="cyt_b559_beta"/>
    <property type="match status" value="1"/>
</dbReference>
<dbReference type="Pfam" id="PF00283">
    <property type="entry name" value="Cytochrom_B559"/>
    <property type="match status" value="1"/>
</dbReference>
<dbReference type="PIRSF" id="PIRSF000037">
    <property type="entry name" value="PsbF"/>
    <property type="match status" value="1"/>
</dbReference>
<dbReference type="SUPFAM" id="SSF161045">
    <property type="entry name" value="Cytochrome b559 subunits"/>
    <property type="match status" value="1"/>
</dbReference>
<dbReference type="PROSITE" id="PS00537">
    <property type="entry name" value="CYTOCHROME_B559"/>
    <property type="match status" value="1"/>
</dbReference>
<reference key="1">
    <citation type="journal article" date="2002" name="Am. J. Bot.">
        <title>Monophyly of the Convolvulaceae and circumscription of their major lineages based on DNA sequences of multiple chloroplast loci.</title>
        <authorList>
            <person name="Stefanovic S."/>
            <person name="Krueger L."/>
            <person name="Olmstead R.G."/>
        </authorList>
        <dbReference type="AGRICOLA" id="IND23320510"/>
    </citation>
    <scope>NUCLEOTIDE SEQUENCE [GENOMIC DNA]</scope>
</reference>
<keyword id="KW-0150">Chloroplast</keyword>
<keyword id="KW-0249">Electron transport</keyword>
<keyword id="KW-0349">Heme</keyword>
<keyword id="KW-0408">Iron</keyword>
<keyword id="KW-0472">Membrane</keyword>
<keyword id="KW-0479">Metal-binding</keyword>
<keyword id="KW-0602">Photosynthesis</keyword>
<keyword id="KW-0604">Photosystem II</keyword>
<keyword id="KW-0934">Plastid</keyword>
<keyword id="KW-0793">Thylakoid</keyword>
<keyword id="KW-0812">Transmembrane</keyword>
<keyword id="KW-1133">Transmembrane helix</keyword>
<keyword id="KW-0813">Transport</keyword>
<comment type="function">
    <text evidence="1">This b-type cytochrome is tightly associated with the reaction center of photosystem II (PSII). PSII is a light-driven water:plastoquinone oxidoreductase that uses light energy to abstract electrons from H(2)O, generating O(2) and a proton gradient subsequently used for ATP formation. It consists of a core antenna complex that captures photons, and an electron transfer chain that converts photonic excitation into a charge separation.</text>
</comment>
<comment type="cofactor">
    <cofactor evidence="1">
        <name>heme b</name>
        <dbReference type="ChEBI" id="CHEBI:60344"/>
    </cofactor>
    <text evidence="1">With its partner (PsbE) binds heme. PSII binds additional chlorophylls, carotenoids and specific lipids.</text>
</comment>
<comment type="subunit">
    <text evidence="1">Heterodimer of an alpha subunit and a beta subunit. PSII is composed of 1 copy each of membrane proteins PsbA, PsbB, PsbC, PsbD, PsbE, PsbF, PsbH, PsbI, PsbJ, PsbK, PsbL, PsbM, PsbT, PsbX, PsbY, PsbZ, Psb30/Ycf12, at least 3 peripheral proteins of the oxygen-evolving complex and a large number of cofactors. It forms dimeric complexes.</text>
</comment>
<comment type="subcellular location">
    <subcellularLocation>
        <location evidence="1">Plastid</location>
        <location evidence="1">Chloroplast thylakoid membrane</location>
        <topology evidence="1">Single-pass membrane protein</topology>
    </subcellularLocation>
</comment>
<comment type="similarity">
    <text evidence="1">Belongs to the PsbE/PsbF family.</text>
</comment>
<sequence>MTIDRTYPIFTVRWLAVHGLAVPTVFFLGSISAMQFIQR</sequence>
<proteinExistence type="inferred from homology"/>
<protein>
    <recommendedName>
        <fullName evidence="1">Cytochrome b559 subunit beta</fullName>
    </recommendedName>
    <alternativeName>
        <fullName evidence="1">PSII reaction center subunit VI</fullName>
    </alternativeName>
</protein>
<organism>
    <name type="scientific">Ipomoea alba</name>
    <name type="common">Moonflower</name>
    <dbReference type="NCBI Taxonomy" id="89634"/>
    <lineage>
        <taxon>Eukaryota</taxon>
        <taxon>Viridiplantae</taxon>
        <taxon>Streptophyta</taxon>
        <taxon>Embryophyta</taxon>
        <taxon>Tracheophyta</taxon>
        <taxon>Spermatophyta</taxon>
        <taxon>Magnoliopsida</taxon>
        <taxon>eudicotyledons</taxon>
        <taxon>Gunneridae</taxon>
        <taxon>Pentapetalae</taxon>
        <taxon>asterids</taxon>
        <taxon>lamiids</taxon>
        <taxon>Solanales</taxon>
        <taxon>Convolvulaceae</taxon>
        <taxon>Ipomoeeae</taxon>
        <taxon>Ipomoea</taxon>
    </lineage>
</organism>
<feature type="chain" id="PRO_0000200403" description="Cytochrome b559 subunit beta">
    <location>
        <begin position="1"/>
        <end position="39"/>
    </location>
</feature>
<feature type="transmembrane region" description="Helical" evidence="1">
    <location>
        <begin position="14"/>
        <end position="30"/>
    </location>
</feature>
<feature type="binding site" description="axial binding residue" evidence="1">
    <location>
        <position position="18"/>
    </location>
    <ligand>
        <name>heme</name>
        <dbReference type="ChEBI" id="CHEBI:30413"/>
        <note>ligand shared with alpha subunit</note>
    </ligand>
    <ligandPart>
        <name>Fe</name>
        <dbReference type="ChEBI" id="CHEBI:18248"/>
    </ligandPart>
</feature>
<accession>Q7H8J8</accession>
<geneLocation type="chloroplast"/>
<name>PSBF_IPOAL</name>